<reference key="1">
    <citation type="journal article" date="2008" name="J. Bacteriol.">
        <title>The genome sequence of the tomato-pathogenic actinomycete Clavibacter michiganensis subsp. michiganensis NCPPB382 reveals a large island involved in pathogenicity.</title>
        <authorList>
            <person name="Gartemann K.-H."/>
            <person name="Abt B."/>
            <person name="Bekel T."/>
            <person name="Burger A."/>
            <person name="Engemann J."/>
            <person name="Fluegel M."/>
            <person name="Gaigalat L."/>
            <person name="Goesmann A."/>
            <person name="Graefen I."/>
            <person name="Kalinowski J."/>
            <person name="Kaup O."/>
            <person name="Kirchner O."/>
            <person name="Krause L."/>
            <person name="Linke B."/>
            <person name="McHardy A."/>
            <person name="Meyer F."/>
            <person name="Pohle S."/>
            <person name="Rueckert C."/>
            <person name="Schneiker S."/>
            <person name="Zellermann E.-M."/>
            <person name="Puehler A."/>
            <person name="Eichenlaub R."/>
            <person name="Kaiser O."/>
            <person name="Bartels D."/>
        </authorList>
    </citation>
    <scope>NUCLEOTIDE SEQUENCE [LARGE SCALE GENOMIC DNA]</scope>
    <source>
        <strain>NCPPB 382</strain>
    </source>
</reference>
<gene>
    <name evidence="1" type="primary">alaS</name>
    <name type="ordered locus">CMM_1802</name>
</gene>
<dbReference type="EC" id="6.1.1.7" evidence="1"/>
<dbReference type="EMBL" id="AM711867">
    <property type="protein sequence ID" value="CAN01858.1"/>
    <property type="molecule type" value="Genomic_DNA"/>
</dbReference>
<dbReference type="RefSeq" id="WP_012038490.1">
    <property type="nucleotide sequence ID" value="NC_009480.1"/>
</dbReference>
<dbReference type="SMR" id="A5CRZ5"/>
<dbReference type="KEGG" id="cmi:CMM_1802"/>
<dbReference type="eggNOG" id="COG0013">
    <property type="taxonomic scope" value="Bacteria"/>
</dbReference>
<dbReference type="HOGENOM" id="CLU_004485_1_1_11"/>
<dbReference type="OrthoDB" id="9803884at2"/>
<dbReference type="Proteomes" id="UP000001564">
    <property type="component" value="Chromosome"/>
</dbReference>
<dbReference type="GO" id="GO:0005829">
    <property type="term" value="C:cytosol"/>
    <property type="evidence" value="ECO:0007669"/>
    <property type="project" value="TreeGrafter"/>
</dbReference>
<dbReference type="GO" id="GO:0004813">
    <property type="term" value="F:alanine-tRNA ligase activity"/>
    <property type="evidence" value="ECO:0007669"/>
    <property type="project" value="UniProtKB-UniRule"/>
</dbReference>
<dbReference type="GO" id="GO:0002161">
    <property type="term" value="F:aminoacyl-tRNA deacylase activity"/>
    <property type="evidence" value="ECO:0007669"/>
    <property type="project" value="TreeGrafter"/>
</dbReference>
<dbReference type="GO" id="GO:0005524">
    <property type="term" value="F:ATP binding"/>
    <property type="evidence" value="ECO:0007669"/>
    <property type="project" value="UniProtKB-UniRule"/>
</dbReference>
<dbReference type="GO" id="GO:0000049">
    <property type="term" value="F:tRNA binding"/>
    <property type="evidence" value="ECO:0007669"/>
    <property type="project" value="UniProtKB-KW"/>
</dbReference>
<dbReference type="GO" id="GO:0008270">
    <property type="term" value="F:zinc ion binding"/>
    <property type="evidence" value="ECO:0007669"/>
    <property type="project" value="UniProtKB-UniRule"/>
</dbReference>
<dbReference type="GO" id="GO:0006419">
    <property type="term" value="P:alanyl-tRNA aminoacylation"/>
    <property type="evidence" value="ECO:0007669"/>
    <property type="project" value="UniProtKB-UniRule"/>
</dbReference>
<dbReference type="CDD" id="cd00673">
    <property type="entry name" value="AlaRS_core"/>
    <property type="match status" value="1"/>
</dbReference>
<dbReference type="FunFam" id="3.10.310.40:FF:000001">
    <property type="entry name" value="Alanine--tRNA ligase"/>
    <property type="match status" value="1"/>
</dbReference>
<dbReference type="FunFam" id="3.30.54.20:FF:000001">
    <property type="entry name" value="Alanine--tRNA ligase"/>
    <property type="match status" value="1"/>
</dbReference>
<dbReference type="FunFam" id="3.30.980.10:FF:000004">
    <property type="entry name" value="Alanine--tRNA ligase, cytoplasmic"/>
    <property type="match status" value="1"/>
</dbReference>
<dbReference type="Gene3D" id="2.40.30.130">
    <property type="match status" value="1"/>
</dbReference>
<dbReference type="Gene3D" id="3.10.310.40">
    <property type="match status" value="1"/>
</dbReference>
<dbReference type="Gene3D" id="3.30.54.20">
    <property type="match status" value="1"/>
</dbReference>
<dbReference type="Gene3D" id="6.10.250.550">
    <property type="match status" value="1"/>
</dbReference>
<dbReference type="Gene3D" id="3.30.930.10">
    <property type="entry name" value="Bira Bifunctional Protein, Domain 2"/>
    <property type="match status" value="1"/>
</dbReference>
<dbReference type="Gene3D" id="3.30.980.10">
    <property type="entry name" value="Threonyl-trna Synthetase, Chain A, domain 2"/>
    <property type="match status" value="1"/>
</dbReference>
<dbReference type="HAMAP" id="MF_00036_B">
    <property type="entry name" value="Ala_tRNA_synth_B"/>
    <property type="match status" value="1"/>
</dbReference>
<dbReference type="InterPro" id="IPR045864">
    <property type="entry name" value="aa-tRNA-synth_II/BPL/LPL"/>
</dbReference>
<dbReference type="InterPro" id="IPR002318">
    <property type="entry name" value="Ala-tRNA-lgiase_IIc"/>
</dbReference>
<dbReference type="InterPro" id="IPR018162">
    <property type="entry name" value="Ala-tRNA-ligase_IIc_anticod-bd"/>
</dbReference>
<dbReference type="InterPro" id="IPR018165">
    <property type="entry name" value="Ala-tRNA-synth_IIc_core"/>
</dbReference>
<dbReference type="InterPro" id="IPR018164">
    <property type="entry name" value="Ala-tRNA-synth_IIc_N"/>
</dbReference>
<dbReference type="InterPro" id="IPR050058">
    <property type="entry name" value="Ala-tRNA_ligase"/>
</dbReference>
<dbReference type="InterPro" id="IPR023033">
    <property type="entry name" value="Ala_tRNA_ligase_euk/bac"/>
</dbReference>
<dbReference type="InterPro" id="IPR003156">
    <property type="entry name" value="DHHA1_dom"/>
</dbReference>
<dbReference type="InterPro" id="IPR018163">
    <property type="entry name" value="Thr/Ala-tRNA-synth_IIc_edit"/>
</dbReference>
<dbReference type="InterPro" id="IPR009000">
    <property type="entry name" value="Transl_B-barrel_sf"/>
</dbReference>
<dbReference type="InterPro" id="IPR012947">
    <property type="entry name" value="tRNA_SAD"/>
</dbReference>
<dbReference type="NCBIfam" id="TIGR00344">
    <property type="entry name" value="alaS"/>
    <property type="match status" value="1"/>
</dbReference>
<dbReference type="PANTHER" id="PTHR11777:SF9">
    <property type="entry name" value="ALANINE--TRNA LIGASE, CYTOPLASMIC"/>
    <property type="match status" value="1"/>
</dbReference>
<dbReference type="PANTHER" id="PTHR11777">
    <property type="entry name" value="ALANYL-TRNA SYNTHETASE"/>
    <property type="match status" value="1"/>
</dbReference>
<dbReference type="Pfam" id="PF02272">
    <property type="entry name" value="DHHA1"/>
    <property type="match status" value="1"/>
</dbReference>
<dbReference type="Pfam" id="PF01411">
    <property type="entry name" value="tRNA-synt_2c"/>
    <property type="match status" value="1"/>
</dbReference>
<dbReference type="Pfam" id="PF07973">
    <property type="entry name" value="tRNA_SAD"/>
    <property type="match status" value="1"/>
</dbReference>
<dbReference type="PRINTS" id="PR00980">
    <property type="entry name" value="TRNASYNTHALA"/>
</dbReference>
<dbReference type="SMART" id="SM00863">
    <property type="entry name" value="tRNA_SAD"/>
    <property type="match status" value="1"/>
</dbReference>
<dbReference type="SUPFAM" id="SSF55681">
    <property type="entry name" value="Class II aaRS and biotin synthetases"/>
    <property type="match status" value="1"/>
</dbReference>
<dbReference type="SUPFAM" id="SSF101353">
    <property type="entry name" value="Putative anticodon-binding domain of alanyl-tRNA synthetase (AlaRS)"/>
    <property type="match status" value="1"/>
</dbReference>
<dbReference type="SUPFAM" id="SSF55186">
    <property type="entry name" value="ThrRS/AlaRS common domain"/>
    <property type="match status" value="1"/>
</dbReference>
<dbReference type="SUPFAM" id="SSF50447">
    <property type="entry name" value="Translation proteins"/>
    <property type="match status" value="1"/>
</dbReference>
<dbReference type="PROSITE" id="PS50860">
    <property type="entry name" value="AA_TRNA_LIGASE_II_ALA"/>
    <property type="match status" value="1"/>
</dbReference>
<keyword id="KW-0030">Aminoacyl-tRNA synthetase</keyword>
<keyword id="KW-0067">ATP-binding</keyword>
<keyword id="KW-0963">Cytoplasm</keyword>
<keyword id="KW-0436">Ligase</keyword>
<keyword id="KW-0479">Metal-binding</keyword>
<keyword id="KW-0547">Nucleotide-binding</keyword>
<keyword id="KW-0648">Protein biosynthesis</keyword>
<keyword id="KW-0694">RNA-binding</keyword>
<keyword id="KW-0820">tRNA-binding</keyword>
<keyword id="KW-0862">Zinc</keyword>
<proteinExistence type="inferred from homology"/>
<organism>
    <name type="scientific">Clavibacter michiganensis subsp. michiganensis (strain NCPPB 382)</name>
    <dbReference type="NCBI Taxonomy" id="443906"/>
    <lineage>
        <taxon>Bacteria</taxon>
        <taxon>Bacillati</taxon>
        <taxon>Actinomycetota</taxon>
        <taxon>Actinomycetes</taxon>
        <taxon>Micrococcales</taxon>
        <taxon>Microbacteriaceae</taxon>
        <taxon>Clavibacter</taxon>
    </lineage>
</organism>
<accession>A5CRZ5</accession>
<name>SYA_CLAM3</name>
<protein>
    <recommendedName>
        <fullName evidence="1">Alanine--tRNA ligase</fullName>
        <ecNumber evidence="1">6.1.1.7</ecNumber>
    </recommendedName>
    <alternativeName>
        <fullName evidence="1">Alanyl-tRNA synthetase</fullName>
        <shortName evidence="1">AlaRS</shortName>
    </alternativeName>
</protein>
<evidence type="ECO:0000255" key="1">
    <source>
        <dbReference type="HAMAP-Rule" id="MF_00036"/>
    </source>
</evidence>
<sequence length="885" mass="95391">MQTADIRNAWLTYFGDRGHTVVPSASLVSDDPTLLFTVAGMVPFVPYLTGVVPAPFPRATSVQKCIRTLDIEEVGRTPRHGTFFQMNGNFSFGDYFKEQAIAYAWELLTTSEADGGLGFSPDDLWVTVYHEDDEARQAWKRIAGLPDERIQGLGRDTNYWHTGQPGPAGPCSEIFFDRGPAYGADGGPATDDDRYVEIWNLVFMQYLRGAGTGKSDFEILGDLPKKNIDTGMGLERVAFLKQGVENMYEIDQVRPVLDRAAELSGRRYGADHEDDVRMRIVADHVRSSLMLMSDGVRPSNEGRGYILRRLMRRTVRAMRLMGVDAATFGELFPASRDAMKAAYPEVSDDFDRISRLAYAEEETFLRTLSGGTTILDVAVGETKAKGGERIAGDTAFLLHDTFGFPIDLTLEMAEENGLTVDREAFDRLMLEQRTRAKADAKSKKTALADLTVYSEFRAAGETRFTGYDELETGTTILGLIVGGRSVDHAVAGDIAEVILPETSLYAESGGQEADAGSIVGQGFDLEVLDVQKPVKGLISHRVQVRSGEVGVGDAATTVVDADWRRGATQAHSGTHLVHAALRQVLGQDAHQSGSYNRAGYMRLDFAWNQALSSETRSEIEDIANGAVRDDLRVVTRVMPIDEAKQLGAMALFGEKYGDTVRVVDIGGPWSRELCAGTHVSSSAQIGLINVVGESSVGSTNRRIESLVGREAFQDLAVERAIVSQLTSTLKTPREQLPDRIADLMQNLKTAERRIADFEAQALQQRVPALLAQGSRVGAVTLIQESLGAVRSADEVRQLVTLVRERAGSEPVVVALAGDAGGKPTVIVATNQAARDAGAKAGQLARAAAAVLGGGGGGKDDLAQGGGSDVSAIGDALTAVRQALAS</sequence>
<comment type="function">
    <text evidence="1">Catalyzes the attachment of alanine to tRNA(Ala) in a two-step reaction: alanine is first activated by ATP to form Ala-AMP and then transferred to the acceptor end of tRNA(Ala). Also edits incorrectly charged Ser-tRNA(Ala) and Gly-tRNA(Ala) via its editing domain.</text>
</comment>
<comment type="catalytic activity">
    <reaction evidence="1">
        <text>tRNA(Ala) + L-alanine + ATP = L-alanyl-tRNA(Ala) + AMP + diphosphate</text>
        <dbReference type="Rhea" id="RHEA:12540"/>
        <dbReference type="Rhea" id="RHEA-COMP:9657"/>
        <dbReference type="Rhea" id="RHEA-COMP:9923"/>
        <dbReference type="ChEBI" id="CHEBI:30616"/>
        <dbReference type="ChEBI" id="CHEBI:33019"/>
        <dbReference type="ChEBI" id="CHEBI:57972"/>
        <dbReference type="ChEBI" id="CHEBI:78442"/>
        <dbReference type="ChEBI" id="CHEBI:78497"/>
        <dbReference type="ChEBI" id="CHEBI:456215"/>
        <dbReference type="EC" id="6.1.1.7"/>
    </reaction>
</comment>
<comment type="cofactor">
    <cofactor evidence="1">
        <name>Zn(2+)</name>
        <dbReference type="ChEBI" id="CHEBI:29105"/>
    </cofactor>
    <text evidence="1">Binds 1 zinc ion per subunit.</text>
</comment>
<comment type="subcellular location">
    <subcellularLocation>
        <location evidence="1">Cytoplasm</location>
    </subcellularLocation>
</comment>
<comment type="domain">
    <text evidence="1">Consists of three domains; the N-terminal catalytic domain, the editing domain and the C-terminal C-Ala domain. The editing domain removes incorrectly charged amino acids, while the C-Ala domain, along with tRNA(Ala), serves as a bridge to cooperatively bring together the editing and aminoacylation centers thus stimulating deacylation of misacylated tRNAs.</text>
</comment>
<comment type="similarity">
    <text evidence="1">Belongs to the class-II aminoacyl-tRNA synthetase family.</text>
</comment>
<feature type="chain" id="PRO_0000347556" description="Alanine--tRNA ligase">
    <location>
        <begin position="1"/>
        <end position="885"/>
    </location>
</feature>
<feature type="binding site" evidence="1">
    <location>
        <position position="571"/>
    </location>
    <ligand>
        <name>Zn(2+)</name>
        <dbReference type="ChEBI" id="CHEBI:29105"/>
    </ligand>
</feature>
<feature type="binding site" evidence="1">
    <location>
        <position position="575"/>
    </location>
    <ligand>
        <name>Zn(2+)</name>
        <dbReference type="ChEBI" id="CHEBI:29105"/>
    </ligand>
</feature>
<feature type="binding site" evidence="1">
    <location>
        <position position="674"/>
    </location>
    <ligand>
        <name>Zn(2+)</name>
        <dbReference type="ChEBI" id="CHEBI:29105"/>
    </ligand>
</feature>
<feature type="binding site" evidence="1">
    <location>
        <position position="678"/>
    </location>
    <ligand>
        <name>Zn(2+)</name>
        <dbReference type="ChEBI" id="CHEBI:29105"/>
    </ligand>
</feature>